<dbReference type="EMBL" id="AAFI02000023">
    <property type="protein sequence ID" value="EAL68231.1"/>
    <property type="molecule type" value="Genomic_DNA"/>
</dbReference>
<dbReference type="RefSeq" id="XP_642138.1">
    <property type="nucleotide sequence ID" value="XM_637046.1"/>
</dbReference>
<dbReference type="SMR" id="Q54YR4"/>
<dbReference type="FunCoup" id="Q54YR4">
    <property type="interactions" value="228"/>
</dbReference>
<dbReference type="STRING" id="44689.Q54YR4"/>
<dbReference type="GlyGen" id="Q54YR4">
    <property type="glycosylation" value="1 site"/>
</dbReference>
<dbReference type="PaxDb" id="44689-DDB0235194"/>
<dbReference type="EnsemblProtists" id="EAL68231">
    <property type="protein sequence ID" value="EAL68231"/>
    <property type="gene ID" value="DDB_G0278117"/>
</dbReference>
<dbReference type="GeneID" id="8621346"/>
<dbReference type="KEGG" id="ddi:DDB_G0278117"/>
<dbReference type="dictyBase" id="DDB_G0278117">
    <property type="gene designation" value="sec61b"/>
</dbReference>
<dbReference type="VEuPathDB" id="AmoebaDB:DDB_G0278117"/>
<dbReference type="eggNOG" id="KOG3457">
    <property type="taxonomic scope" value="Eukaryota"/>
</dbReference>
<dbReference type="HOGENOM" id="CLU_133423_1_2_1"/>
<dbReference type="InParanoid" id="Q54YR4"/>
<dbReference type="OMA" id="MEEGNNM"/>
<dbReference type="PhylomeDB" id="Q54YR4"/>
<dbReference type="Reactome" id="R-DDI-9609523">
    <property type="pathway name" value="Insertion of tail-anchored proteins into the endoplasmic reticulum membrane"/>
</dbReference>
<dbReference type="PRO" id="PR:Q54YR4"/>
<dbReference type="Proteomes" id="UP000002195">
    <property type="component" value="Chromosome 3"/>
</dbReference>
<dbReference type="GO" id="GO:0016020">
    <property type="term" value="C:membrane"/>
    <property type="evidence" value="ECO:0000318"/>
    <property type="project" value="GO_Central"/>
</dbReference>
<dbReference type="GO" id="GO:0005784">
    <property type="term" value="C:Sec61 translocon complex"/>
    <property type="evidence" value="ECO:0000250"/>
    <property type="project" value="dictyBase"/>
</dbReference>
<dbReference type="GO" id="GO:0005085">
    <property type="term" value="F:guanyl-nucleotide exchange factor activity"/>
    <property type="evidence" value="ECO:0000318"/>
    <property type="project" value="GO_Central"/>
</dbReference>
<dbReference type="GO" id="GO:0006613">
    <property type="term" value="P:cotranslational protein targeting to membrane"/>
    <property type="evidence" value="ECO:0000250"/>
    <property type="project" value="dictyBase"/>
</dbReference>
<dbReference type="GO" id="GO:0031204">
    <property type="term" value="P:post-translational protein targeting to membrane, translocation"/>
    <property type="evidence" value="ECO:0000318"/>
    <property type="project" value="GO_Central"/>
</dbReference>
<dbReference type="GO" id="GO:0006616">
    <property type="term" value="P:SRP-dependent cotranslational protein targeting to membrane, translocation"/>
    <property type="evidence" value="ECO:0000318"/>
    <property type="project" value="GO_Central"/>
</dbReference>
<dbReference type="InterPro" id="IPR030671">
    <property type="entry name" value="Sec61-beta/Sbh"/>
</dbReference>
<dbReference type="InterPro" id="IPR016482">
    <property type="entry name" value="SecG/Sec61-beta/Sbh"/>
</dbReference>
<dbReference type="PANTHER" id="PTHR13509">
    <property type="entry name" value="SEC61 SUBUNIT BETA"/>
    <property type="match status" value="1"/>
</dbReference>
<dbReference type="Pfam" id="PF03911">
    <property type="entry name" value="Sec61_beta"/>
    <property type="match status" value="1"/>
</dbReference>
<dbReference type="PIRSF" id="PIRSF006398">
    <property type="entry name" value="Sec61_beta_euk"/>
    <property type="match status" value="1"/>
</dbReference>
<accession>Q54YR4</accession>
<gene>
    <name type="primary">sec61b</name>
    <name type="ORF">DDB_G0278117</name>
</gene>
<reference key="1">
    <citation type="journal article" date="2005" name="Nature">
        <title>The genome of the social amoeba Dictyostelium discoideum.</title>
        <authorList>
            <person name="Eichinger L."/>
            <person name="Pachebat J.A."/>
            <person name="Gloeckner G."/>
            <person name="Rajandream M.A."/>
            <person name="Sucgang R."/>
            <person name="Berriman M."/>
            <person name="Song J."/>
            <person name="Olsen R."/>
            <person name="Szafranski K."/>
            <person name="Xu Q."/>
            <person name="Tunggal B."/>
            <person name="Kummerfeld S."/>
            <person name="Madera M."/>
            <person name="Konfortov B.A."/>
            <person name="Rivero F."/>
            <person name="Bankier A.T."/>
            <person name="Lehmann R."/>
            <person name="Hamlin N."/>
            <person name="Davies R."/>
            <person name="Gaudet P."/>
            <person name="Fey P."/>
            <person name="Pilcher K."/>
            <person name="Chen G."/>
            <person name="Saunders D."/>
            <person name="Sodergren E.J."/>
            <person name="Davis P."/>
            <person name="Kerhornou A."/>
            <person name="Nie X."/>
            <person name="Hall N."/>
            <person name="Anjard C."/>
            <person name="Hemphill L."/>
            <person name="Bason N."/>
            <person name="Farbrother P."/>
            <person name="Desany B."/>
            <person name="Just E."/>
            <person name="Morio T."/>
            <person name="Rost R."/>
            <person name="Churcher C.M."/>
            <person name="Cooper J."/>
            <person name="Haydock S."/>
            <person name="van Driessche N."/>
            <person name="Cronin A."/>
            <person name="Goodhead I."/>
            <person name="Muzny D.M."/>
            <person name="Mourier T."/>
            <person name="Pain A."/>
            <person name="Lu M."/>
            <person name="Harper D."/>
            <person name="Lindsay R."/>
            <person name="Hauser H."/>
            <person name="James K.D."/>
            <person name="Quiles M."/>
            <person name="Madan Babu M."/>
            <person name="Saito T."/>
            <person name="Buchrieser C."/>
            <person name="Wardroper A."/>
            <person name="Felder M."/>
            <person name="Thangavelu M."/>
            <person name="Johnson D."/>
            <person name="Knights A."/>
            <person name="Loulseged H."/>
            <person name="Mungall K.L."/>
            <person name="Oliver K."/>
            <person name="Price C."/>
            <person name="Quail M.A."/>
            <person name="Urushihara H."/>
            <person name="Hernandez J."/>
            <person name="Rabbinowitsch E."/>
            <person name="Steffen D."/>
            <person name="Sanders M."/>
            <person name="Ma J."/>
            <person name="Kohara Y."/>
            <person name="Sharp S."/>
            <person name="Simmonds M.N."/>
            <person name="Spiegler S."/>
            <person name="Tivey A."/>
            <person name="Sugano S."/>
            <person name="White B."/>
            <person name="Walker D."/>
            <person name="Woodward J.R."/>
            <person name="Winckler T."/>
            <person name="Tanaka Y."/>
            <person name="Shaulsky G."/>
            <person name="Schleicher M."/>
            <person name="Weinstock G.M."/>
            <person name="Rosenthal A."/>
            <person name="Cox E.C."/>
            <person name="Chisholm R.L."/>
            <person name="Gibbs R.A."/>
            <person name="Loomis W.F."/>
            <person name="Platzer M."/>
            <person name="Kay R.R."/>
            <person name="Williams J.G."/>
            <person name="Dear P.H."/>
            <person name="Noegel A.A."/>
            <person name="Barrell B.G."/>
            <person name="Kuspa A."/>
        </authorList>
    </citation>
    <scope>NUCLEOTIDE SEQUENCE [LARGE SCALE GENOMIC DNA]</scope>
    <source>
        <strain>AX4</strain>
    </source>
</reference>
<keyword id="KW-0256">Endoplasmic reticulum</keyword>
<keyword id="KW-0472">Membrane</keyword>
<keyword id="KW-0653">Protein transport</keyword>
<keyword id="KW-1185">Reference proteome</keyword>
<keyword id="KW-0811">Translocation</keyword>
<keyword id="KW-0812">Transmembrane</keyword>
<keyword id="KW-1133">Transmembrane helix</keyword>
<keyword id="KW-0813">Transport</keyword>
<sequence>MKRPSTQRAPATVNKGGNSMMKFYSEDAIGLKVGPTAVLFMSLIFIAFVIILHIMGKYTRS</sequence>
<name>SC61B_DICDI</name>
<feature type="chain" id="PRO_0000328022" description="Protein transport protein Sec61 subunit beta">
    <location>
        <begin position="1"/>
        <end position="61"/>
    </location>
</feature>
<feature type="topological domain" description="Cytoplasmic" evidence="3">
    <location>
        <begin position="1"/>
        <end position="35"/>
    </location>
</feature>
<feature type="transmembrane region" description="Helical" evidence="3">
    <location>
        <begin position="36"/>
        <end position="56"/>
    </location>
</feature>
<feature type="topological domain" description="Extracellular" evidence="3">
    <location>
        <begin position="57"/>
        <end position="61"/>
    </location>
</feature>
<evidence type="ECO:0000250" key="1"/>
<evidence type="ECO:0000250" key="2">
    <source>
        <dbReference type="UniProtKB" id="P60467"/>
    </source>
</evidence>
<evidence type="ECO:0000255" key="3"/>
<evidence type="ECO:0000305" key="4"/>
<organism>
    <name type="scientific">Dictyostelium discoideum</name>
    <name type="common">Social amoeba</name>
    <dbReference type="NCBI Taxonomy" id="44689"/>
    <lineage>
        <taxon>Eukaryota</taxon>
        <taxon>Amoebozoa</taxon>
        <taxon>Evosea</taxon>
        <taxon>Eumycetozoa</taxon>
        <taxon>Dictyostelia</taxon>
        <taxon>Dictyosteliales</taxon>
        <taxon>Dictyosteliaceae</taxon>
        <taxon>Dictyostelium</taxon>
    </lineage>
</organism>
<proteinExistence type="inferred from homology"/>
<protein>
    <recommendedName>
        <fullName>Protein transport protein Sec61 subunit beta</fullName>
    </recommendedName>
</protein>
<comment type="function">
    <text evidence="2">Component of SEC61 channel-forming translocon complex that mediates transport of signal peptide-containing precursor polypeptides across the endoplasmic reticulum (ER). Forms a ribosome receptor and a gated pore in the ER membrane, both functions required for cotranslational translocation of nascent polypeptides.</text>
</comment>
<comment type="subunit">
    <text evidence="2">The SEC61 channel-forming translocon complex.</text>
</comment>
<comment type="subcellular location">
    <subcellularLocation>
        <location evidence="1">Endoplasmic reticulum membrane</location>
        <topology evidence="1">Single-pass membrane protein</topology>
    </subcellularLocation>
</comment>
<comment type="similarity">
    <text evidence="4">Belongs to the SEC61-beta family.</text>
</comment>